<accession>Q27115</accession>
<reference key="1">
    <citation type="journal article" date="1996" name="Eur. J. Biochem.">
        <title>Glucose uptake in Trypanosoma vivax and molecular characterization of its transporter gene.</title>
        <authorList>
            <person name="Waitumbi J.N."/>
            <person name="Tetaud E."/>
            <person name="Baltz T."/>
        </authorList>
    </citation>
    <scope>NUCLEOTIDE SEQUENCE [GENOMIC DNA]</scope>
</reference>
<keyword id="KW-0325">Glycoprotein</keyword>
<keyword id="KW-0472">Membrane</keyword>
<keyword id="KW-0762">Sugar transport</keyword>
<keyword id="KW-0812">Transmembrane</keyword>
<keyword id="KW-1133">Transmembrane helix</keyword>
<keyword id="KW-0813">Transport</keyword>
<name>HT1_TRYVI</name>
<comment type="function">
    <text>Facilitative glucose transporter. Binds D-fructose and cytochalasin-B, but not D-galactose.</text>
</comment>
<comment type="subcellular location">
    <subcellularLocation>
        <location>Membrane</location>
        <topology>Multi-pass membrane protein</topology>
    </subcellularLocation>
</comment>
<comment type="similarity">
    <text evidence="3">Belongs to the major facilitator superfamily. Sugar transporter (TC 2.A.1.1) family.</text>
</comment>
<protein>
    <recommendedName>
        <fullName>Glucose transporter HT1</fullName>
    </recommendedName>
</protein>
<dbReference type="EMBL" id="L47540">
    <property type="protein sequence ID" value="AAB03513.1"/>
    <property type="molecule type" value="Genomic_DNA"/>
</dbReference>
<dbReference type="PIR" id="S65462">
    <property type="entry name" value="S65462"/>
</dbReference>
<dbReference type="SMR" id="Q27115"/>
<dbReference type="GlyCosmos" id="Q27115">
    <property type="glycosylation" value="2 sites, No reported glycans"/>
</dbReference>
<dbReference type="VEuPathDB" id="TriTrypDB:TvY486_1008330"/>
<dbReference type="GO" id="GO:0016020">
    <property type="term" value="C:membrane"/>
    <property type="evidence" value="ECO:0007669"/>
    <property type="project" value="UniProtKB-SubCell"/>
</dbReference>
<dbReference type="GO" id="GO:0015149">
    <property type="term" value="F:hexose transmembrane transporter activity"/>
    <property type="evidence" value="ECO:0007669"/>
    <property type="project" value="TreeGrafter"/>
</dbReference>
<dbReference type="Gene3D" id="1.20.1250.20">
    <property type="entry name" value="MFS general substrate transporter like domains"/>
    <property type="match status" value="2"/>
</dbReference>
<dbReference type="InterPro" id="IPR045263">
    <property type="entry name" value="GLUT"/>
</dbReference>
<dbReference type="InterPro" id="IPR020846">
    <property type="entry name" value="MFS_dom"/>
</dbReference>
<dbReference type="InterPro" id="IPR005828">
    <property type="entry name" value="MFS_sugar_transport-like"/>
</dbReference>
<dbReference type="InterPro" id="IPR036259">
    <property type="entry name" value="MFS_trans_sf"/>
</dbReference>
<dbReference type="InterPro" id="IPR003663">
    <property type="entry name" value="Sugar/inositol_transpt"/>
</dbReference>
<dbReference type="NCBIfam" id="TIGR00879">
    <property type="entry name" value="SP"/>
    <property type="match status" value="1"/>
</dbReference>
<dbReference type="PANTHER" id="PTHR23503:SF8">
    <property type="entry name" value="FACILITATED GLUCOSE TRANSPORTER PROTEIN 1"/>
    <property type="match status" value="1"/>
</dbReference>
<dbReference type="PANTHER" id="PTHR23503">
    <property type="entry name" value="SOLUTE CARRIER FAMILY 2"/>
    <property type="match status" value="1"/>
</dbReference>
<dbReference type="Pfam" id="PF00083">
    <property type="entry name" value="Sugar_tr"/>
    <property type="match status" value="1"/>
</dbReference>
<dbReference type="PRINTS" id="PR00171">
    <property type="entry name" value="SUGRTRNSPORT"/>
</dbReference>
<dbReference type="SUPFAM" id="SSF103473">
    <property type="entry name" value="MFS general substrate transporter"/>
    <property type="match status" value="1"/>
</dbReference>
<dbReference type="PROSITE" id="PS50850">
    <property type="entry name" value="MFS"/>
    <property type="match status" value="1"/>
</dbReference>
<proteinExistence type="inferred from homology"/>
<evidence type="ECO:0000255" key="1"/>
<evidence type="ECO:0000256" key="2">
    <source>
        <dbReference type="SAM" id="MobiDB-lite"/>
    </source>
</evidence>
<evidence type="ECO:0000305" key="3"/>
<feature type="chain" id="PRO_0000050386" description="Glucose transporter HT1">
    <location>
        <begin position="1"/>
        <end position="543"/>
    </location>
</feature>
<feature type="topological domain" description="Cytoplasmic" evidence="1">
    <location>
        <begin position="1"/>
        <end position="38"/>
    </location>
</feature>
<feature type="transmembrane region" description="Helical; Name=1" evidence="1">
    <location>
        <begin position="39"/>
        <end position="59"/>
    </location>
</feature>
<feature type="topological domain" description="Extracellular" evidence="1">
    <location>
        <begin position="60"/>
        <end position="120"/>
    </location>
</feature>
<feature type="transmembrane region" description="Helical; Name=2" evidence="1">
    <location>
        <begin position="121"/>
        <end position="141"/>
    </location>
</feature>
<feature type="topological domain" description="Cytoplasmic" evidence="1">
    <location>
        <begin position="142"/>
        <end position="147"/>
    </location>
</feature>
<feature type="transmembrane region" description="Helical; Name=3" evidence="1">
    <location>
        <begin position="148"/>
        <end position="168"/>
    </location>
</feature>
<feature type="topological domain" description="Extracellular" evidence="1">
    <location>
        <begin position="169"/>
        <end position="172"/>
    </location>
</feature>
<feature type="transmembrane region" description="Helical; Name=4" evidence="1">
    <location>
        <begin position="173"/>
        <end position="193"/>
    </location>
</feature>
<feature type="topological domain" description="Cytoplasmic" evidence="1">
    <location>
        <begin position="194"/>
        <end position="212"/>
    </location>
</feature>
<feature type="transmembrane region" description="Helical; Name=5" evidence="1">
    <location>
        <begin position="213"/>
        <end position="233"/>
    </location>
</feature>
<feature type="topological domain" description="Extracellular" evidence="1">
    <location>
        <begin position="234"/>
        <end position="248"/>
    </location>
</feature>
<feature type="transmembrane region" description="Helical; Name=6" evidence="1">
    <location>
        <begin position="249"/>
        <end position="269"/>
    </location>
</feature>
<feature type="topological domain" description="Cytoplasmic" evidence="1">
    <location>
        <begin position="270"/>
        <end position="300"/>
    </location>
</feature>
<feature type="transmembrane region" description="Helical; Name=7" evidence="1">
    <location>
        <begin position="301"/>
        <end position="321"/>
    </location>
</feature>
<feature type="topological domain" description="Extracellular" evidence="1">
    <location>
        <begin position="322"/>
        <end position="337"/>
    </location>
</feature>
<feature type="transmembrane region" description="Helical; Name=8" evidence="1">
    <location>
        <begin position="338"/>
        <end position="358"/>
    </location>
</feature>
<feature type="topological domain" description="Cytoplasmic" evidence="1">
    <location>
        <begin position="359"/>
        <end position="364"/>
    </location>
</feature>
<feature type="transmembrane region" description="Helical; Name=9" evidence="1">
    <location>
        <begin position="365"/>
        <end position="385"/>
    </location>
</feature>
<feature type="topological domain" description="Extracellular" evidence="1">
    <location>
        <begin position="386"/>
        <end position="400"/>
    </location>
</feature>
<feature type="transmembrane region" description="Helical; Name=10" evidence="1">
    <location>
        <begin position="401"/>
        <end position="421"/>
    </location>
</feature>
<feature type="topological domain" description="Cytoplasmic" evidence="1">
    <location>
        <begin position="422"/>
        <end position="436"/>
    </location>
</feature>
<feature type="transmembrane region" description="Helical; Name=11" evidence="1">
    <location>
        <begin position="437"/>
        <end position="457"/>
    </location>
</feature>
<feature type="topological domain" description="Extracellular" evidence="1">
    <location>
        <begin position="458"/>
        <end position="470"/>
    </location>
</feature>
<feature type="transmembrane region" description="Helical; Name=12" evidence="1">
    <location>
        <begin position="471"/>
        <end position="491"/>
    </location>
</feature>
<feature type="topological domain" description="Cytoplasmic" evidence="1">
    <location>
        <begin position="492"/>
        <end position="543"/>
    </location>
</feature>
<feature type="region of interest" description="Disordered" evidence="2">
    <location>
        <begin position="1"/>
        <end position="24"/>
    </location>
</feature>
<feature type="region of interest" description="Disordered" evidence="2">
    <location>
        <begin position="503"/>
        <end position="543"/>
    </location>
</feature>
<feature type="compositionally biased region" description="Polar residues" evidence="2">
    <location>
        <begin position="7"/>
        <end position="19"/>
    </location>
</feature>
<feature type="compositionally biased region" description="Polar residues" evidence="2">
    <location>
        <begin position="503"/>
        <end position="519"/>
    </location>
</feature>
<feature type="glycosylation site" description="N-linked (GlcNAc...) asparagine" evidence="1">
    <location>
        <position position="90"/>
    </location>
</feature>
<feature type="glycosylation site" description="N-linked (GlcNAc...) asparagine" evidence="1">
    <location>
        <position position="91"/>
    </location>
</feature>
<organism>
    <name type="scientific">Trypanosoma vivax</name>
    <name type="common">Duttonella vivax</name>
    <dbReference type="NCBI Taxonomy" id="5699"/>
    <lineage>
        <taxon>Eukaryota</taxon>
        <taxon>Discoba</taxon>
        <taxon>Euglenozoa</taxon>
        <taxon>Kinetoplastea</taxon>
        <taxon>Metakinetoplastina</taxon>
        <taxon>Trypanosomatida</taxon>
        <taxon>Trypanosomatidae</taxon>
        <taxon>Trypanosoma</taxon>
        <taxon>Duttonella</taxon>
    </lineage>
</organism>
<sequence>MPEYPTEDTNASGKTSGSSPDDHTDDNAPSFFSCENLCIVQVPVSTGSLNGFSIGFVAVYMHLYEIFSGCSALESSGACSGNSKCTWIPNNSTCVWKDCNGAAGATTCKDGSGYNSLESGLFACSMIVGSMIGSIFAGKFLSKFGLKMSFIVSGVLGIVGSALIHVATRGSTLWVMCVGRFLMGLVLGLVCVASPMYVNENAHPKYRKTIGVLFQVFTTFGIMFAALLGLAIVKTPGHDKASGLLWRMQVFCSVSTALSALLLVLGLVVRKSKTSFAGGVDSAGEGVLDPNEYSVRQMLGPLAVGAVTAGTLQLTGINAVMNYAPEIMRNIGMDPMEGNSAVMSWNFVTALVAIPLVSRFTMRQLFLACSFMASCACLIMCGIPVYPGVASVDNRNIVATVGIAVFIAAFEFGVGSCFFVLAQDLFPRSFRPTGSSFVVMAQFIFNIMINLLYPITVEAISGGKGKSPEKGQSVSFIIFGIIGIICFVLQLRYLTPWEDGQGTSTSPTARCNAPTSPNNGEGEPATADMSPVEMSTPKHSGAA</sequence>
<gene>
    <name type="primary">HT1</name>
</gene>